<protein>
    <recommendedName>
        <fullName evidence="1">Secretion monitor</fullName>
    </recommendedName>
</protein>
<name>SECM_SALTI</name>
<evidence type="ECO:0000255" key="1">
    <source>
        <dbReference type="HAMAP-Rule" id="MF_01332"/>
    </source>
</evidence>
<evidence type="ECO:0000305" key="2"/>
<organism>
    <name type="scientific">Salmonella typhi</name>
    <dbReference type="NCBI Taxonomy" id="90370"/>
    <lineage>
        <taxon>Bacteria</taxon>
        <taxon>Pseudomonadati</taxon>
        <taxon>Pseudomonadota</taxon>
        <taxon>Gammaproteobacteria</taxon>
        <taxon>Enterobacterales</taxon>
        <taxon>Enterobacteriaceae</taxon>
        <taxon>Salmonella</taxon>
    </lineage>
</organism>
<proteinExistence type="inferred from homology"/>
<comment type="function">
    <text evidence="1">Regulates secA expression by translational coupling of the secM secA operon. Translational pausing at a specific Pro residue 5 residues before the end of the protein may allow disruption of a mRNA repressor helix that normally suppresses secA translation initiation.</text>
</comment>
<comment type="subcellular location">
    <subcellularLocation>
        <location evidence="1">Cytoplasm</location>
        <location evidence="1">Cytosol</location>
    </subcellularLocation>
    <subcellularLocation>
        <location evidence="1">Periplasm</location>
    </subcellularLocation>
    <text evidence="1">The active form is cytosolic, while the periplasmic form is rapidly degraded, mainly by the tail-specific protease.</text>
</comment>
<comment type="similarity">
    <text evidence="1">Belongs to the SecM family.</text>
</comment>
<comment type="sequence caution" evidence="2">
    <conflict type="erroneous initiation">
        <sequence resource="EMBL-CDS" id="AAO67871"/>
    </conflict>
</comment>
<comment type="sequence caution" evidence="2">
    <conflict type="erroneous initiation">
        <sequence resource="EMBL-CDS" id="CAD01292"/>
    </conflict>
</comment>
<feature type="signal peptide" evidence="1">
    <location>
        <begin position="1"/>
        <end position="37"/>
    </location>
</feature>
<feature type="chain" id="PRO_0000031991" description="Secretion monitor">
    <location>
        <begin position="38"/>
        <end position="165"/>
    </location>
</feature>
<sequence length="165" mass="18117">MSGILTRWRQLGRRYFWPHLLLGMVAASFGLPALSNAAETNTPARTTASTASKVNFSHLALLEASNRRPNFTVDYWHQHAIRTVIRHLSFAMAPQTLPVADAPSPLQAHHIALLNTLSAMLTQEGTPPAIVRRLSLAYFAPQTAFSIPAWISQAQGIRAGPQRLS</sequence>
<keyword id="KW-0963">Cytoplasm</keyword>
<keyword id="KW-0574">Periplasm</keyword>
<keyword id="KW-0732">Signal</keyword>
<gene>
    <name evidence="1" type="primary">secM</name>
    <name type="ordered locus">STY0155</name>
    <name type="ordered locus">t0139</name>
</gene>
<accession>Q8Z9G4</accession>
<reference key="1">
    <citation type="journal article" date="2001" name="Nature">
        <title>Complete genome sequence of a multiple drug resistant Salmonella enterica serovar Typhi CT18.</title>
        <authorList>
            <person name="Parkhill J."/>
            <person name="Dougan G."/>
            <person name="James K.D."/>
            <person name="Thomson N.R."/>
            <person name="Pickard D."/>
            <person name="Wain J."/>
            <person name="Churcher C.M."/>
            <person name="Mungall K.L."/>
            <person name="Bentley S.D."/>
            <person name="Holden M.T.G."/>
            <person name="Sebaihia M."/>
            <person name="Baker S."/>
            <person name="Basham D."/>
            <person name="Brooks K."/>
            <person name="Chillingworth T."/>
            <person name="Connerton P."/>
            <person name="Cronin A."/>
            <person name="Davis P."/>
            <person name="Davies R.M."/>
            <person name="Dowd L."/>
            <person name="White N."/>
            <person name="Farrar J."/>
            <person name="Feltwell T."/>
            <person name="Hamlin N."/>
            <person name="Haque A."/>
            <person name="Hien T.T."/>
            <person name="Holroyd S."/>
            <person name="Jagels K."/>
            <person name="Krogh A."/>
            <person name="Larsen T.S."/>
            <person name="Leather S."/>
            <person name="Moule S."/>
            <person name="O'Gaora P."/>
            <person name="Parry C."/>
            <person name="Quail M.A."/>
            <person name="Rutherford K.M."/>
            <person name="Simmonds M."/>
            <person name="Skelton J."/>
            <person name="Stevens K."/>
            <person name="Whitehead S."/>
            <person name="Barrell B.G."/>
        </authorList>
    </citation>
    <scope>NUCLEOTIDE SEQUENCE [LARGE SCALE GENOMIC DNA]</scope>
    <source>
        <strain>CT18</strain>
    </source>
</reference>
<reference key="2">
    <citation type="journal article" date="2003" name="J. Bacteriol.">
        <title>Comparative genomics of Salmonella enterica serovar Typhi strains Ty2 and CT18.</title>
        <authorList>
            <person name="Deng W."/>
            <person name="Liou S.-R."/>
            <person name="Plunkett G. III"/>
            <person name="Mayhew G.F."/>
            <person name="Rose D.J."/>
            <person name="Burland V."/>
            <person name="Kodoyianni V."/>
            <person name="Schwartz D.C."/>
            <person name="Blattner F.R."/>
        </authorList>
    </citation>
    <scope>NUCLEOTIDE SEQUENCE [LARGE SCALE GENOMIC DNA]</scope>
    <source>
        <strain>ATCC 700931 / Ty2</strain>
    </source>
</reference>
<reference key="3">
    <citation type="journal article" date="2000" name="J. Bacteriol.">
        <title>Revised translation start site for secM defines an atypical signal peptide that regulates Escherichia coli secA expression.</title>
        <authorList>
            <person name="Sarker S."/>
            <person name="Rudd K.E."/>
            <person name="Oliver D.B."/>
        </authorList>
    </citation>
    <scope>IDENTIFICATION OF START CODON</scope>
</reference>
<dbReference type="EMBL" id="AL513382">
    <property type="protein sequence ID" value="CAD01292.1"/>
    <property type="status" value="ALT_INIT"/>
    <property type="molecule type" value="Genomic_DNA"/>
</dbReference>
<dbReference type="EMBL" id="AE014613">
    <property type="protein sequence ID" value="AAO67871.1"/>
    <property type="status" value="ALT_INIT"/>
    <property type="molecule type" value="Genomic_DNA"/>
</dbReference>
<dbReference type="RefSeq" id="WP_000014336.1">
    <property type="nucleotide sequence ID" value="NZ_WSUR01000009.1"/>
</dbReference>
<dbReference type="SMR" id="Q8Z9G4"/>
<dbReference type="STRING" id="220341.gene:17584194"/>
<dbReference type="KEGG" id="stt:t0139"/>
<dbReference type="KEGG" id="sty:STY0155"/>
<dbReference type="PATRIC" id="fig|90370.929.peg.4232"/>
<dbReference type="eggNOG" id="ENOG5031JGK">
    <property type="taxonomic scope" value="Bacteria"/>
</dbReference>
<dbReference type="HOGENOM" id="CLU_108853_0_0_6"/>
<dbReference type="OMA" id="NYWQQHA"/>
<dbReference type="Proteomes" id="UP000000541">
    <property type="component" value="Chromosome"/>
</dbReference>
<dbReference type="Proteomes" id="UP000002670">
    <property type="component" value="Chromosome"/>
</dbReference>
<dbReference type="GO" id="GO:0005829">
    <property type="term" value="C:cytosol"/>
    <property type="evidence" value="ECO:0007669"/>
    <property type="project" value="UniProtKB-SubCell"/>
</dbReference>
<dbReference type="GO" id="GO:0042597">
    <property type="term" value="C:periplasmic space"/>
    <property type="evidence" value="ECO:0007669"/>
    <property type="project" value="UniProtKB-SubCell"/>
</dbReference>
<dbReference type="GO" id="GO:0045182">
    <property type="term" value="F:translation regulator activity"/>
    <property type="evidence" value="ECO:0007669"/>
    <property type="project" value="InterPro"/>
</dbReference>
<dbReference type="HAMAP" id="MF_01332">
    <property type="entry name" value="SecM"/>
    <property type="match status" value="1"/>
</dbReference>
<dbReference type="InterPro" id="IPR009502">
    <property type="entry name" value="SecM"/>
</dbReference>
<dbReference type="NCBIfam" id="NF002799">
    <property type="entry name" value="PRK02943.1-1"/>
    <property type="match status" value="1"/>
</dbReference>
<dbReference type="Pfam" id="PF06558">
    <property type="entry name" value="SecM"/>
    <property type="match status" value="1"/>
</dbReference>
<dbReference type="PIRSF" id="PIRSF004572">
    <property type="entry name" value="SecM"/>
    <property type="match status" value="1"/>
</dbReference>